<gene>
    <name evidence="1" type="primary">selA</name>
    <name type="ordered locus">Geob_0561</name>
</gene>
<evidence type="ECO:0000255" key="1">
    <source>
        <dbReference type="HAMAP-Rule" id="MF_00423"/>
    </source>
</evidence>
<protein>
    <recommendedName>
        <fullName evidence="1">L-seryl-tRNA(Sec) selenium transferase</fullName>
        <ecNumber evidence="1">2.9.1.1</ecNumber>
    </recommendedName>
    <alternativeName>
        <fullName evidence="1">Selenocysteine synthase</fullName>
        <shortName evidence="1">Sec synthase</shortName>
    </alternativeName>
    <alternativeName>
        <fullName evidence="1">Selenocysteinyl-tRNA(Sec) synthase</fullName>
    </alternativeName>
</protein>
<reference key="1">
    <citation type="submission" date="2009-01" db="EMBL/GenBank/DDBJ databases">
        <title>Complete sequence of Geobacter sp. FRC-32.</title>
        <authorList>
            <consortium name="US DOE Joint Genome Institute"/>
            <person name="Lucas S."/>
            <person name="Copeland A."/>
            <person name="Lapidus A."/>
            <person name="Glavina del Rio T."/>
            <person name="Dalin E."/>
            <person name="Tice H."/>
            <person name="Bruce D."/>
            <person name="Goodwin L."/>
            <person name="Pitluck S."/>
            <person name="Saunders E."/>
            <person name="Brettin T."/>
            <person name="Detter J.C."/>
            <person name="Han C."/>
            <person name="Larimer F."/>
            <person name="Land M."/>
            <person name="Hauser L."/>
            <person name="Kyrpides N."/>
            <person name="Ovchinnikova G."/>
            <person name="Kostka J."/>
            <person name="Richardson P."/>
        </authorList>
    </citation>
    <scope>NUCLEOTIDE SEQUENCE [LARGE SCALE GENOMIC DNA]</scope>
    <source>
        <strain>DSM 22248 / JCM 15807 / FRC-32</strain>
    </source>
</reference>
<name>SELA_GEODF</name>
<organism>
    <name type="scientific">Geotalea daltonii (strain DSM 22248 / JCM 15807 / FRC-32)</name>
    <name type="common">Geobacter daltonii</name>
    <dbReference type="NCBI Taxonomy" id="316067"/>
    <lineage>
        <taxon>Bacteria</taxon>
        <taxon>Pseudomonadati</taxon>
        <taxon>Thermodesulfobacteriota</taxon>
        <taxon>Desulfuromonadia</taxon>
        <taxon>Geobacterales</taxon>
        <taxon>Geobacteraceae</taxon>
        <taxon>Geotalea</taxon>
    </lineage>
</organism>
<sequence>MNLLKQIPKVDKVLSWEGVQTLLETHPRPVVMKAVRNVLEVLRAIVLREEGDAGLFTDEAIMKRVNRELDEINSLNLKRLVNGTGVVIHTNLGRSPLPESVRQTLNEIAFGYSNLEFDLATGERGSRYSHVEEILCELTGAEAALVVNNNAAAVLLALSSLAAGREVIVSRGELVEIGGSFRIPDVMRQSGAILREVGATNRTHLQDYSAAVATETGLLLKVHCSNFAVVGFTAEVSAEQLVELGRQHSLPVMADVGSGNLVELSRRLGCNEPTVQEFVSAGVDVITFSGDKLLGGPQAGIIVGRRELLATMKKHPLLRAVRIDKLTLAALEGTLQLYRDERRALQEIPTLRMLALSKEELAETAKRLAARLQKVVPPVVTLALVEGFSQVGGGALPLLQLPTTLISVSVGDKSAQEIEKVMRLSPVPVIGRIFKGAFLLDPRTINEEDISALTAALQGIVP</sequence>
<proteinExistence type="inferred from homology"/>
<keyword id="KW-0963">Cytoplasm</keyword>
<keyword id="KW-0648">Protein biosynthesis</keyword>
<keyword id="KW-0663">Pyridoxal phosphate</keyword>
<keyword id="KW-1185">Reference proteome</keyword>
<keyword id="KW-0711">Selenium</keyword>
<keyword id="KW-0808">Transferase</keyword>
<accession>B9LZW4</accession>
<dbReference type="EC" id="2.9.1.1" evidence="1"/>
<dbReference type="EMBL" id="CP001390">
    <property type="protein sequence ID" value="ACM18928.1"/>
    <property type="molecule type" value="Genomic_DNA"/>
</dbReference>
<dbReference type="RefSeq" id="WP_012645657.1">
    <property type="nucleotide sequence ID" value="NC_011979.1"/>
</dbReference>
<dbReference type="SMR" id="B9LZW4"/>
<dbReference type="STRING" id="316067.Geob_0561"/>
<dbReference type="KEGG" id="geo:Geob_0561"/>
<dbReference type="eggNOG" id="COG1921">
    <property type="taxonomic scope" value="Bacteria"/>
</dbReference>
<dbReference type="HOGENOM" id="CLU_038142_1_0_7"/>
<dbReference type="OrthoDB" id="9787096at2"/>
<dbReference type="UniPathway" id="UPA00906">
    <property type="reaction ID" value="UER00896"/>
</dbReference>
<dbReference type="Proteomes" id="UP000007721">
    <property type="component" value="Chromosome"/>
</dbReference>
<dbReference type="GO" id="GO:0005737">
    <property type="term" value="C:cytoplasm"/>
    <property type="evidence" value="ECO:0007669"/>
    <property type="project" value="UniProtKB-SubCell"/>
</dbReference>
<dbReference type="GO" id="GO:0004125">
    <property type="term" value="F:L-seryl-tRNA(Sec) selenium transferase activity"/>
    <property type="evidence" value="ECO:0007669"/>
    <property type="project" value="UniProtKB-UniRule"/>
</dbReference>
<dbReference type="GO" id="GO:0001717">
    <property type="term" value="P:conversion of seryl-tRNAsec to selenocys-tRNAsec"/>
    <property type="evidence" value="ECO:0007669"/>
    <property type="project" value="UniProtKB-UniRule"/>
</dbReference>
<dbReference type="GO" id="GO:0001514">
    <property type="term" value="P:selenocysteine incorporation"/>
    <property type="evidence" value="ECO:0007669"/>
    <property type="project" value="UniProtKB-UniRule"/>
</dbReference>
<dbReference type="Gene3D" id="3.90.1150.180">
    <property type="match status" value="1"/>
</dbReference>
<dbReference type="Gene3D" id="3.40.640.10">
    <property type="entry name" value="Type I PLP-dependent aspartate aminotransferase-like (Major domain)"/>
    <property type="match status" value="1"/>
</dbReference>
<dbReference type="HAMAP" id="MF_00423">
    <property type="entry name" value="SelA"/>
    <property type="match status" value="1"/>
</dbReference>
<dbReference type="InterPro" id="IPR015424">
    <property type="entry name" value="PyrdxlP-dep_Trfase"/>
</dbReference>
<dbReference type="InterPro" id="IPR015421">
    <property type="entry name" value="PyrdxlP-dep_Trfase_major"/>
</dbReference>
<dbReference type="InterPro" id="IPR018319">
    <property type="entry name" value="SelA-like"/>
</dbReference>
<dbReference type="InterPro" id="IPR004534">
    <property type="entry name" value="SelA_trans"/>
</dbReference>
<dbReference type="InterPro" id="IPR025862">
    <property type="entry name" value="SelA_trans_N_dom"/>
</dbReference>
<dbReference type="NCBIfam" id="TIGR00474">
    <property type="entry name" value="selA"/>
    <property type="match status" value="1"/>
</dbReference>
<dbReference type="PANTHER" id="PTHR32328">
    <property type="entry name" value="L-SERYL-TRNA(SEC) SELENIUM TRANSFERASE"/>
    <property type="match status" value="1"/>
</dbReference>
<dbReference type="PANTHER" id="PTHR32328:SF0">
    <property type="entry name" value="L-SERYL-TRNA(SEC) SELENIUM TRANSFERASE"/>
    <property type="match status" value="1"/>
</dbReference>
<dbReference type="Pfam" id="PF12390">
    <property type="entry name" value="Se-cys_synth_N"/>
    <property type="match status" value="1"/>
</dbReference>
<dbReference type="Pfam" id="PF03841">
    <property type="entry name" value="SelA"/>
    <property type="match status" value="1"/>
</dbReference>
<dbReference type="SUPFAM" id="SSF53383">
    <property type="entry name" value="PLP-dependent transferases"/>
    <property type="match status" value="1"/>
</dbReference>
<comment type="function">
    <text evidence="1">Converts seryl-tRNA(Sec) to selenocysteinyl-tRNA(Sec) required for selenoprotein biosynthesis.</text>
</comment>
<comment type="catalytic activity">
    <reaction evidence="1">
        <text>L-seryl-tRNA(Sec) + selenophosphate + H(+) = L-selenocysteinyl-tRNA(Sec) + phosphate</text>
        <dbReference type="Rhea" id="RHEA:22728"/>
        <dbReference type="Rhea" id="RHEA-COMP:9742"/>
        <dbReference type="Rhea" id="RHEA-COMP:9743"/>
        <dbReference type="ChEBI" id="CHEBI:15378"/>
        <dbReference type="ChEBI" id="CHEBI:16144"/>
        <dbReference type="ChEBI" id="CHEBI:43474"/>
        <dbReference type="ChEBI" id="CHEBI:78533"/>
        <dbReference type="ChEBI" id="CHEBI:78573"/>
        <dbReference type="EC" id="2.9.1.1"/>
    </reaction>
</comment>
<comment type="cofactor">
    <cofactor evidence="1">
        <name>pyridoxal 5'-phosphate</name>
        <dbReference type="ChEBI" id="CHEBI:597326"/>
    </cofactor>
</comment>
<comment type="pathway">
    <text evidence="1">Aminoacyl-tRNA biosynthesis; selenocysteinyl-tRNA(Sec) biosynthesis; selenocysteinyl-tRNA(Sec) from L-seryl-tRNA(Sec) (bacterial route): step 1/1.</text>
</comment>
<comment type="subcellular location">
    <subcellularLocation>
        <location evidence="1">Cytoplasm</location>
    </subcellularLocation>
</comment>
<comment type="similarity">
    <text evidence="1">Belongs to the SelA family.</text>
</comment>
<feature type="chain" id="PRO_1000134924" description="L-seryl-tRNA(Sec) selenium transferase">
    <location>
        <begin position="1"/>
        <end position="462"/>
    </location>
</feature>
<feature type="modified residue" description="N6-(pyridoxal phosphate)lysine" evidence="1">
    <location>
        <position position="292"/>
    </location>
</feature>